<proteinExistence type="inferred from homology"/>
<dbReference type="EC" id="1.4.4.2" evidence="1"/>
<dbReference type="EMBL" id="CP000821">
    <property type="protein sequence ID" value="ABV38277.1"/>
    <property type="molecule type" value="Genomic_DNA"/>
</dbReference>
<dbReference type="RefSeq" id="WP_012144007.1">
    <property type="nucleotide sequence ID" value="NC_009831.1"/>
</dbReference>
<dbReference type="SMR" id="A8FZK4"/>
<dbReference type="STRING" id="425104.Ssed_3673"/>
<dbReference type="KEGG" id="sse:Ssed_3673"/>
<dbReference type="eggNOG" id="COG0403">
    <property type="taxonomic scope" value="Bacteria"/>
</dbReference>
<dbReference type="eggNOG" id="COG1003">
    <property type="taxonomic scope" value="Bacteria"/>
</dbReference>
<dbReference type="HOGENOM" id="CLU_004620_2_1_6"/>
<dbReference type="OrthoDB" id="9801272at2"/>
<dbReference type="Proteomes" id="UP000002015">
    <property type="component" value="Chromosome"/>
</dbReference>
<dbReference type="GO" id="GO:0005829">
    <property type="term" value="C:cytosol"/>
    <property type="evidence" value="ECO:0007669"/>
    <property type="project" value="TreeGrafter"/>
</dbReference>
<dbReference type="GO" id="GO:0005960">
    <property type="term" value="C:glycine cleavage complex"/>
    <property type="evidence" value="ECO:0007669"/>
    <property type="project" value="TreeGrafter"/>
</dbReference>
<dbReference type="GO" id="GO:0016594">
    <property type="term" value="F:glycine binding"/>
    <property type="evidence" value="ECO:0007669"/>
    <property type="project" value="TreeGrafter"/>
</dbReference>
<dbReference type="GO" id="GO:0004375">
    <property type="term" value="F:glycine dehydrogenase (decarboxylating) activity"/>
    <property type="evidence" value="ECO:0007669"/>
    <property type="project" value="UniProtKB-EC"/>
</dbReference>
<dbReference type="GO" id="GO:0030170">
    <property type="term" value="F:pyridoxal phosphate binding"/>
    <property type="evidence" value="ECO:0007669"/>
    <property type="project" value="TreeGrafter"/>
</dbReference>
<dbReference type="GO" id="GO:0019464">
    <property type="term" value="P:glycine decarboxylation via glycine cleavage system"/>
    <property type="evidence" value="ECO:0007669"/>
    <property type="project" value="UniProtKB-UniRule"/>
</dbReference>
<dbReference type="CDD" id="cd00613">
    <property type="entry name" value="GDC-P"/>
    <property type="match status" value="2"/>
</dbReference>
<dbReference type="FunFam" id="3.40.640.10:FF:000005">
    <property type="entry name" value="Glycine dehydrogenase (decarboxylating), mitochondrial"/>
    <property type="match status" value="1"/>
</dbReference>
<dbReference type="FunFam" id="3.90.1150.10:FF:000007">
    <property type="entry name" value="Glycine dehydrogenase (decarboxylating), mitochondrial"/>
    <property type="match status" value="1"/>
</dbReference>
<dbReference type="FunFam" id="3.40.640.10:FF:000007">
    <property type="entry name" value="glycine dehydrogenase (Decarboxylating), mitochondrial"/>
    <property type="match status" value="1"/>
</dbReference>
<dbReference type="Gene3D" id="3.90.1150.10">
    <property type="entry name" value="Aspartate Aminotransferase, domain 1"/>
    <property type="match status" value="2"/>
</dbReference>
<dbReference type="Gene3D" id="3.40.640.10">
    <property type="entry name" value="Type I PLP-dependent aspartate aminotransferase-like (Major domain)"/>
    <property type="match status" value="2"/>
</dbReference>
<dbReference type="HAMAP" id="MF_00711">
    <property type="entry name" value="GcvP"/>
    <property type="match status" value="1"/>
</dbReference>
<dbReference type="InterPro" id="IPR003437">
    <property type="entry name" value="GcvP"/>
</dbReference>
<dbReference type="InterPro" id="IPR049316">
    <property type="entry name" value="GDC-P_C"/>
</dbReference>
<dbReference type="InterPro" id="IPR049315">
    <property type="entry name" value="GDC-P_N"/>
</dbReference>
<dbReference type="InterPro" id="IPR020581">
    <property type="entry name" value="GDC_P"/>
</dbReference>
<dbReference type="InterPro" id="IPR015424">
    <property type="entry name" value="PyrdxlP-dep_Trfase"/>
</dbReference>
<dbReference type="InterPro" id="IPR015421">
    <property type="entry name" value="PyrdxlP-dep_Trfase_major"/>
</dbReference>
<dbReference type="InterPro" id="IPR015422">
    <property type="entry name" value="PyrdxlP-dep_Trfase_small"/>
</dbReference>
<dbReference type="NCBIfam" id="TIGR00461">
    <property type="entry name" value="gcvP"/>
    <property type="match status" value="1"/>
</dbReference>
<dbReference type="NCBIfam" id="NF003346">
    <property type="entry name" value="PRK04366.1"/>
    <property type="match status" value="1"/>
</dbReference>
<dbReference type="PANTHER" id="PTHR11773:SF13">
    <property type="entry name" value="GLYCINE DEHYDROGENASE (DECARBOXYLATING)"/>
    <property type="match status" value="1"/>
</dbReference>
<dbReference type="PANTHER" id="PTHR11773">
    <property type="entry name" value="GLYCINE DEHYDROGENASE, DECARBOXYLATING"/>
    <property type="match status" value="1"/>
</dbReference>
<dbReference type="Pfam" id="PF21478">
    <property type="entry name" value="GcvP2_C"/>
    <property type="match status" value="1"/>
</dbReference>
<dbReference type="Pfam" id="PF02347">
    <property type="entry name" value="GDC-P"/>
    <property type="match status" value="2"/>
</dbReference>
<dbReference type="SUPFAM" id="SSF53383">
    <property type="entry name" value="PLP-dependent transferases"/>
    <property type="match status" value="2"/>
</dbReference>
<sequence length="962" mass="104778">MTTETLTQLEQHELFIRRHIGPDSAQQQEMLNFVGAESLEDLTQQIVPESIRLNRDLAVGSACGEAEGMAYIREIADKNKVFKSYIGMGYYGTEVPSVIQRNVLENPGWYTAYTPYQPEIAQGRLEAILNFQQVSMDLTGLDLASASLLDEATAAAEAMALAKRVSKAKKANIFFVADDVFPQTLDVVKTRAECFGFEIVVGPASEAVNYELFGALFQYTNRFGEITDFTELFTELKAKKAVVSVAADIMSLVMLKSPGSMGADVVFGSAQRFGVPMGLGGPHAAFFVTRDAHKRSLPGRIIGVSQDTRGNRALRMAMQTREQHIRREKANSNICTAQVLLANMASFYAVYHGPQGLKIIAERIHRLTDILASGLTAKGVELVNGTWFDTLSLKATDSEAITARAVAAGINLRIDSDGVLGVSLAETTLREDIAELFDVILGEGHGLDVAALDAEIIKAGSSSIPAQLVRTDAILTHPTFNSYHSETEMMRYIKRLENKDLALNHSMISLGSCTMKLNAATEMMPISWPEFGNMHPFCPLDQSEGYTDLIEELSTWLVDITGYDAMCMQANSGASGEYAGLLAIRNYHISRGDAHRNVCLIPQSAHGTNPASAQMAGMKIVVTACDKAGNVDMEDLKAKAAEVAENLSCIMITYPSTHGVYEETVSEICEVIHQHGGQVYLDGANMNAQVGLTTPGSIGADVSHLNLHKTFAIPHGGGGPGMGPIGVKAHLAPFVAGHVVVKHGRESDNNGAVSAAPYGSASILPITWMYIKLLGHQGLRQSTQVALLNANYVMKKLSEHYPVLYTGRNERVAHECIIDLRPLKESSGVTEMDIAKRLNDYGFHAPTMSFPVAGTLMIEPTESESKVELDRFIEAMISIRGEASRVESGEWPADNNPLHNAPHTLADIMDPEFDSRPYSREVAVFPTAAVKLNKFWPTVNRIDDVFGDRNLFCACVPMSEYE</sequence>
<evidence type="ECO:0000255" key="1">
    <source>
        <dbReference type="HAMAP-Rule" id="MF_00711"/>
    </source>
</evidence>
<reference key="1">
    <citation type="submission" date="2007-08" db="EMBL/GenBank/DDBJ databases">
        <title>Complete sequence of Shewanella sediminis HAW-EB3.</title>
        <authorList>
            <consortium name="US DOE Joint Genome Institute"/>
            <person name="Copeland A."/>
            <person name="Lucas S."/>
            <person name="Lapidus A."/>
            <person name="Barry K."/>
            <person name="Glavina del Rio T."/>
            <person name="Dalin E."/>
            <person name="Tice H."/>
            <person name="Pitluck S."/>
            <person name="Chertkov O."/>
            <person name="Brettin T."/>
            <person name="Bruce D."/>
            <person name="Detter J.C."/>
            <person name="Han C."/>
            <person name="Schmutz J."/>
            <person name="Larimer F."/>
            <person name="Land M."/>
            <person name="Hauser L."/>
            <person name="Kyrpides N."/>
            <person name="Kim E."/>
            <person name="Zhao J.-S."/>
            <person name="Richardson P."/>
        </authorList>
    </citation>
    <scope>NUCLEOTIDE SEQUENCE [LARGE SCALE GENOMIC DNA]</scope>
    <source>
        <strain>HAW-EB3</strain>
    </source>
</reference>
<name>GCSP_SHESH</name>
<keyword id="KW-0560">Oxidoreductase</keyword>
<keyword id="KW-0663">Pyridoxal phosphate</keyword>
<keyword id="KW-1185">Reference proteome</keyword>
<accession>A8FZK4</accession>
<feature type="chain" id="PRO_1000083216" description="Glycine dehydrogenase (decarboxylating)">
    <location>
        <begin position="1"/>
        <end position="962"/>
    </location>
</feature>
<feature type="modified residue" description="N6-(pyridoxal phosphate)lysine" evidence="1">
    <location>
        <position position="709"/>
    </location>
</feature>
<protein>
    <recommendedName>
        <fullName evidence="1">Glycine dehydrogenase (decarboxylating)</fullName>
        <ecNumber evidence="1">1.4.4.2</ecNumber>
    </recommendedName>
    <alternativeName>
        <fullName evidence="1">Glycine cleavage system P-protein</fullName>
    </alternativeName>
    <alternativeName>
        <fullName evidence="1">Glycine decarboxylase</fullName>
    </alternativeName>
    <alternativeName>
        <fullName evidence="1">Glycine dehydrogenase (aminomethyl-transferring)</fullName>
    </alternativeName>
</protein>
<organism>
    <name type="scientific">Shewanella sediminis (strain HAW-EB3)</name>
    <dbReference type="NCBI Taxonomy" id="425104"/>
    <lineage>
        <taxon>Bacteria</taxon>
        <taxon>Pseudomonadati</taxon>
        <taxon>Pseudomonadota</taxon>
        <taxon>Gammaproteobacteria</taxon>
        <taxon>Alteromonadales</taxon>
        <taxon>Shewanellaceae</taxon>
        <taxon>Shewanella</taxon>
    </lineage>
</organism>
<gene>
    <name evidence="1" type="primary">gcvP</name>
    <name type="ordered locus">Ssed_3673</name>
</gene>
<comment type="function">
    <text evidence="1">The glycine cleavage system catalyzes the degradation of glycine. The P protein binds the alpha-amino group of glycine through its pyridoxal phosphate cofactor; CO(2) is released and the remaining methylamine moiety is then transferred to the lipoamide cofactor of the H protein.</text>
</comment>
<comment type="catalytic activity">
    <reaction evidence="1">
        <text>N(6)-[(R)-lipoyl]-L-lysyl-[glycine-cleavage complex H protein] + glycine + H(+) = N(6)-[(R)-S(8)-aminomethyldihydrolipoyl]-L-lysyl-[glycine-cleavage complex H protein] + CO2</text>
        <dbReference type="Rhea" id="RHEA:24304"/>
        <dbReference type="Rhea" id="RHEA-COMP:10494"/>
        <dbReference type="Rhea" id="RHEA-COMP:10495"/>
        <dbReference type="ChEBI" id="CHEBI:15378"/>
        <dbReference type="ChEBI" id="CHEBI:16526"/>
        <dbReference type="ChEBI" id="CHEBI:57305"/>
        <dbReference type="ChEBI" id="CHEBI:83099"/>
        <dbReference type="ChEBI" id="CHEBI:83143"/>
        <dbReference type="EC" id="1.4.4.2"/>
    </reaction>
</comment>
<comment type="cofactor">
    <cofactor evidence="1">
        <name>pyridoxal 5'-phosphate</name>
        <dbReference type="ChEBI" id="CHEBI:597326"/>
    </cofactor>
</comment>
<comment type="subunit">
    <text evidence="1">The glycine cleavage system is composed of four proteins: P, T, L and H.</text>
</comment>
<comment type="similarity">
    <text evidence="1">Belongs to the GcvP family.</text>
</comment>